<protein>
    <recommendedName>
        <fullName>ATP-binding cassette sub-family C member 3</fullName>
        <ecNumber evidence="7">7.6.2.-</ecNumber>
        <ecNumber evidence="3">7.6.2.2</ecNumber>
        <ecNumber evidence="3">7.6.2.3</ecNumber>
    </recommendedName>
    <alternativeName>
        <fullName>Canalicular multispecific organic anion transporter 2</fullName>
    </alternativeName>
    <alternativeName>
        <fullName evidence="10">MRP-like protein 2</fullName>
        <shortName evidence="10">MLP-2</shortName>
    </alternativeName>
    <alternativeName>
        <fullName>Multidrug resistance-associated protein 3</fullName>
    </alternativeName>
</protein>
<comment type="function">
    <text evidence="2 3">ATP-dependent transporter of the ATP-binding cassette (ABC) family that binds and hydrolyzes ATP to enable active transport of various substrates including many drugs, toxicants and endogenous compound across cell membranes. Transports glucuronide conjugates such as bilirubin diglucuronide, estradiol-17-beta-o-glucuronide and GSH conjugates such as leukotriene C4 (LTC4) (By similarity). Transports also various bile salts (taurocholate, glycocholate, taurochenodeoxycholate-3-sulfate, taurolithocholate- 3-sulfate). Does not contribute substantially to bile salt physiology but provides an alternative route for the export of bile acids and glucuronides from cholestatic hepatocytes (By similarity). May contribute to regulate the transport of organic compounds in testes across the blood-testis-barrier (By similarity).</text>
</comment>
<comment type="catalytic activity">
    <reaction evidence="3">
        <text>an S-substituted glutathione(in) + ATP + H2O = an S-substituted glutathione(out) + ADP + phosphate + H(+)</text>
        <dbReference type="Rhea" id="RHEA:19121"/>
        <dbReference type="ChEBI" id="CHEBI:15377"/>
        <dbReference type="ChEBI" id="CHEBI:15378"/>
        <dbReference type="ChEBI" id="CHEBI:30616"/>
        <dbReference type="ChEBI" id="CHEBI:43474"/>
        <dbReference type="ChEBI" id="CHEBI:90779"/>
        <dbReference type="ChEBI" id="CHEBI:456216"/>
        <dbReference type="EC" id="7.6.2.3"/>
    </reaction>
    <physiologicalReaction direction="left-to-right" evidence="3">
        <dbReference type="Rhea" id="RHEA:19122"/>
    </physiologicalReaction>
</comment>
<comment type="catalytic activity">
    <reaction evidence="3">
        <text>ATP + H2O + xenobioticSide 1 = ADP + phosphate + xenobioticSide 2.</text>
        <dbReference type="EC" id="7.6.2.2"/>
    </reaction>
</comment>
<comment type="catalytic activity">
    <reaction evidence="7">
        <text>taurocholate(in) + ATP + H2O = taurocholate(out) + ADP + phosphate + H(+)</text>
        <dbReference type="Rhea" id="RHEA:50052"/>
        <dbReference type="ChEBI" id="CHEBI:15377"/>
        <dbReference type="ChEBI" id="CHEBI:15378"/>
        <dbReference type="ChEBI" id="CHEBI:30616"/>
        <dbReference type="ChEBI" id="CHEBI:36257"/>
        <dbReference type="ChEBI" id="CHEBI:43474"/>
        <dbReference type="ChEBI" id="CHEBI:456216"/>
    </reaction>
    <physiologicalReaction direction="left-to-right" evidence="12">
        <dbReference type="Rhea" id="RHEA:50053"/>
    </physiologicalReaction>
</comment>
<comment type="catalytic activity">
    <reaction evidence="7">
        <text>glycocholate(in) + ATP + H2O = glycocholate(out) + ADP + phosphate + H(+)</text>
        <dbReference type="Rhea" id="RHEA:50056"/>
        <dbReference type="ChEBI" id="CHEBI:15377"/>
        <dbReference type="ChEBI" id="CHEBI:15378"/>
        <dbReference type="ChEBI" id="CHEBI:29746"/>
        <dbReference type="ChEBI" id="CHEBI:30616"/>
        <dbReference type="ChEBI" id="CHEBI:43474"/>
        <dbReference type="ChEBI" id="CHEBI:456216"/>
    </reaction>
    <physiologicalReaction direction="left-to-right" evidence="12">
        <dbReference type="Rhea" id="RHEA:50057"/>
    </physiologicalReaction>
</comment>
<comment type="catalytic activity">
    <reaction evidence="7">
        <text>taurolithocholate 3-sulfate(in) + ATP + H2O = taurolithocholate 3-sulfate(out) + ADP + phosphate + H(+)</text>
        <dbReference type="Rhea" id="RHEA:50084"/>
        <dbReference type="ChEBI" id="CHEBI:15377"/>
        <dbReference type="ChEBI" id="CHEBI:15378"/>
        <dbReference type="ChEBI" id="CHEBI:30616"/>
        <dbReference type="ChEBI" id="CHEBI:43474"/>
        <dbReference type="ChEBI" id="CHEBI:58301"/>
        <dbReference type="ChEBI" id="CHEBI:456216"/>
    </reaction>
</comment>
<comment type="catalytic activity">
    <reaction evidence="7">
        <text>17beta-estradiol 17-O-(beta-D-glucuronate)(in) + ATP + H2O = 17beta-estradiol 17-O-(beta-D-glucuronate)(out) + ADP + phosphate + H(+)</text>
        <dbReference type="Rhea" id="RHEA:60128"/>
        <dbReference type="ChEBI" id="CHEBI:15377"/>
        <dbReference type="ChEBI" id="CHEBI:15378"/>
        <dbReference type="ChEBI" id="CHEBI:30616"/>
        <dbReference type="ChEBI" id="CHEBI:43474"/>
        <dbReference type="ChEBI" id="CHEBI:82961"/>
        <dbReference type="ChEBI" id="CHEBI:456216"/>
    </reaction>
    <physiologicalReaction direction="left-to-right" evidence="12">
        <dbReference type="Rhea" id="RHEA:60129"/>
    </physiologicalReaction>
</comment>
<comment type="catalytic activity">
    <reaction evidence="3">
        <text>dehydroepiandrosterone 3-sulfate(in) + ATP + H2O = dehydroepiandrosterone 3-sulfate(out) + ADP + phosphate + H(+)</text>
        <dbReference type="Rhea" id="RHEA:61364"/>
        <dbReference type="ChEBI" id="CHEBI:15377"/>
        <dbReference type="ChEBI" id="CHEBI:15378"/>
        <dbReference type="ChEBI" id="CHEBI:30616"/>
        <dbReference type="ChEBI" id="CHEBI:43474"/>
        <dbReference type="ChEBI" id="CHEBI:57905"/>
        <dbReference type="ChEBI" id="CHEBI:456216"/>
    </reaction>
    <physiologicalReaction direction="left-to-right" evidence="3">
        <dbReference type="Rhea" id="RHEA:61365"/>
    </physiologicalReaction>
</comment>
<comment type="catalytic activity">
    <reaction evidence="3">
        <text>leukotriene C4(in) + ATP + H2O = leukotriene C4(out) + ADP + phosphate + H(+)</text>
        <dbReference type="Rhea" id="RHEA:38963"/>
        <dbReference type="ChEBI" id="CHEBI:15377"/>
        <dbReference type="ChEBI" id="CHEBI:15378"/>
        <dbReference type="ChEBI" id="CHEBI:30616"/>
        <dbReference type="ChEBI" id="CHEBI:43474"/>
        <dbReference type="ChEBI" id="CHEBI:57973"/>
        <dbReference type="ChEBI" id="CHEBI:456216"/>
    </reaction>
    <physiologicalReaction direction="left-to-right" evidence="3">
        <dbReference type="Rhea" id="RHEA:38964"/>
    </physiologicalReaction>
</comment>
<comment type="catalytic activity">
    <reaction evidence="3">
        <text>(4Z,15Z)-bilirubin IXalpha C8-beta-D-glucuronoside(in) + ATP + H2O = (4Z,15Z)-bilirubin IXalpha C8-beta-D-glucuronoside(out) + ADP + phosphate + H(+)</text>
        <dbReference type="Rhea" id="RHEA:66180"/>
        <dbReference type="ChEBI" id="CHEBI:15377"/>
        <dbReference type="ChEBI" id="CHEBI:15378"/>
        <dbReference type="ChEBI" id="CHEBI:30616"/>
        <dbReference type="ChEBI" id="CHEBI:43474"/>
        <dbReference type="ChEBI" id="CHEBI:229704"/>
        <dbReference type="ChEBI" id="CHEBI:456216"/>
    </reaction>
    <physiologicalReaction direction="left-to-right" evidence="3">
        <dbReference type="Rhea" id="RHEA:66181"/>
    </physiologicalReaction>
</comment>
<comment type="catalytic activity">
    <reaction evidence="3">
        <text>(4Z,15Z)-bilirubin IXalpha C8,C12-beta-D-bisglucuronoside(in) + ATP + H2O = (4Z,15Z)-bilirubin IXalpha C8,C12-beta-D-bisglucuronoside(out) + ADP + phosphate + H(+)</text>
        <dbReference type="Rhea" id="RHEA:66192"/>
        <dbReference type="ChEBI" id="CHEBI:15377"/>
        <dbReference type="ChEBI" id="CHEBI:15378"/>
        <dbReference type="ChEBI" id="CHEBI:30616"/>
        <dbReference type="ChEBI" id="CHEBI:43474"/>
        <dbReference type="ChEBI" id="CHEBI:229706"/>
        <dbReference type="ChEBI" id="CHEBI:456216"/>
    </reaction>
    <physiologicalReaction direction="left-to-right" evidence="3">
        <dbReference type="Rhea" id="RHEA:66193"/>
    </physiologicalReaction>
</comment>
<comment type="catalytic activity">
    <reaction evidence="7">
        <text>taurochenodeoxycholate 3-sulfate(in) + ATP + H2O = taurochenodeoxycholate 3-sulfate(out) + ADP + phosphate + H(+)</text>
        <dbReference type="Rhea" id="RHEA:66176"/>
        <dbReference type="ChEBI" id="CHEBI:15377"/>
        <dbReference type="ChEBI" id="CHEBI:15378"/>
        <dbReference type="ChEBI" id="CHEBI:30616"/>
        <dbReference type="ChEBI" id="CHEBI:43474"/>
        <dbReference type="ChEBI" id="CHEBI:166912"/>
        <dbReference type="ChEBI" id="CHEBI:456216"/>
    </reaction>
    <physiologicalReaction direction="left-to-right" evidence="12">
        <dbReference type="Rhea" id="RHEA:66177"/>
    </physiologicalReaction>
</comment>
<comment type="biophysicochemical properties">
    <kinetics>
        <KM evidence="7">1.36 uM for ATP (determined by measuring estradiol-17-beta-o-glucuronide transport)</KM>
        <KM evidence="7">3.06 uM for taurolithocholate sulfate</KM>
        <KM evidence="7">15.9 uM for taurocholate</KM>
        <Vmax evidence="7">161.9 pmol/min/mg enzyme for taurolithocholate-3-sulfate</Vmax>
        <Vmax evidence="7">50.1 pmol/min/mg enzyme for taurocholate transport</Vmax>
    </kinetics>
</comment>
<comment type="subcellular location">
    <subcellularLocation>
        <location evidence="8">Basolateral cell membrane</location>
        <topology evidence="4">Multi-pass membrane protein</topology>
    </subcellularLocation>
    <subcellularLocation>
        <location evidence="3">Basal cell membrane</location>
        <topology evidence="4">Multi-pass membrane protein</topology>
    </subcellularLocation>
</comment>
<comment type="tissue specificity">
    <text evidence="9">Expressed in lung, ileum, colon and liver. Higher in liver of Eisai hyperbilirubinemic rats.</text>
</comment>
<comment type="induction">
    <text evidence="9">Strongly up-regulated under conditions of cholestasis.</text>
</comment>
<comment type="similarity">
    <text evidence="11">Belongs to the ABC transporter superfamily. ABCC family. Conjugate transporter (TC 3.A.1.208) subfamily.</text>
</comment>
<comment type="sequence caution" evidence="11">
    <conflict type="frameshift">
        <sequence resource="EMBL-CDS" id="BAA28955"/>
    </conflict>
</comment>
<proteinExistence type="evidence at protein level"/>
<evidence type="ECO:0000250" key="1"/>
<evidence type="ECO:0000250" key="2">
    <source>
        <dbReference type="UniProtKB" id="B2RX12"/>
    </source>
</evidence>
<evidence type="ECO:0000250" key="3">
    <source>
        <dbReference type="UniProtKB" id="O15438"/>
    </source>
</evidence>
<evidence type="ECO:0000255" key="4"/>
<evidence type="ECO:0000255" key="5">
    <source>
        <dbReference type="PROSITE-ProRule" id="PRU00434"/>
    </source>
</evidence>
<evidence type="ECO:0000255" key="6">
    <source>
        <dbReference type="PROSITE-ProRule" id="PRU00441"/>
    </source>
</evidence>
<evidence type="ECO:0000269" key="7">
    <source>
    </source>
</evidence>
<evidence type="ECO:0000269" key="8">
    <source>
    </source>
</evidence>
<evidence type="ECO:0000269" key="9">
    <source>
    </source>
</evidence>
<evidence type="ECO:0000303" key="10">
    <source>
    </source>
</evidence>
<evidence type="ECO:0000305" key="11"/>
<evidence type="ECO:0000305" key="12">
    <source>
    </source>
</evidence>
<evidence type="ECO:0007744" key="13">
    <source>
    </source>
</evidence>
<sequence>MDRLCGSGELGSKFWDSNLTVYTNTPDLTPCFQNSLLAWVPCIYLWAALPCYLFYLRHHRLGYIVLSCLSRLKTALGVLLWCISWVDLFYSFHGLVHGSSPAPVFFITPLLVGITMLLATLLIQYERLRGVRSSGVLIIFWLLCVICAIIPFRSKILLALAEGKILDPFRFTTFYIYFALVLCAFILSCFQEKPPLFSPENLDTNPCPEASAGFFSRLSFWWFTKLAILGYRRPLEDSDLWSLSEEDCSHKVVQRLLEAWQKQQTQASGPQTAALEPKIAGEDEVLLKARPKTKKPSFLRALVRTFTSSLLMGACFKLIQDLSPSSTHSCSASSSGLFRPHGPYWWGFLLAGLMFVSSTMQTLILHQHYHCIFVMALRIRTAIIGVIYRKALTITNSVKREYTVGEMVNLMSVDAQRFMDVSPFINLLWSAPLQVILAIYFLWQILGPSALAGVAVIVLLIPLNGAVSMKMKTYQVQQMKFKDSRIKLMSEILNGIKVLKLYAWEPTFLEQVEGIRQGELQLLRKGAYLQAISTFIWVCTPFMVTLITLGVYVCVDKNNVLDAEKAFVSLSLFNILKIPLNLLPQLISGMTQTSVSLKRIQDFLNQDELDPQCVERKTISPGRAITIHNGTFSWSKDLPPTLHSINIQIPKGALVAVVGPVGCGKSSLVSALLGEMEKLEGAVSVKGSVAYVPQQAWIQNCTLQENVLFGQPMNPKRYQQALETCALLADLDVLPGGDQTEIGEKGINLSGGQRQRVSLARAVYSDANIFLLDDPLSAVDSHVAKHIFDQVIGPEGVLAGKTRVLVTHGISFLPQTDFIIVLADGQITEMGHYSELLQHDGSFANFLRNYAPDENQEANEGVLQHANEEVLLLEDTLSTHTDLTDTEPAIYEVRKQFMREMSSLSSEGEGQNRPVLKRYTSSLEKEVPATQTKETGALIKEEIAETGNVKLSVYWDYAKSVGLCTTLFICLLYAGQNAVAIGANVWLSAWTNDVEEHGQQNNTSVRLGVYATLGILQGLLVMLSAFTMVVGAIQAARLLHTALLHNQIRAPQSFFDTTPSGRILNRFSKDIYVIHEVLAPTILMLFNSFYTSISTIVVIVASTPLFCVVVLPLAVFYGFVQRFYVATSRQLKRLESVSRSPIFSHFSETVTGTSVIRAYGRVQDFKVLSDAKVDSNQKTTYPYIASNRWLGVHVEFVGNCVVLFSALFAVIGRNSLNPGLVGLSVSYALQVTLSLNWMIRTLSDLESNIIAVERVKEYSKTETEAPWVLESNRAPEGWPRSGVVEFRNYSVRYRPGLELVLKNLTLHVQGGEKVGIVGRTGAGKSSMTLCLFRILEAAEGEIFIDGLNVAHIGLHDLRSQLTIIPQDPILFSGTLRMNLDPFGRYSDEDIWRTLELSHLSAFVSSQPTGLDFQCSEGGDNLSVGQRQLVCLARALLRKSRVLVLDEATAAIDLETDDLIQGTIRTQFEDCTVLTIAHRLNTIMDYNRVLVLDKGVVAEFDSPVNLIAAGGIFYGMAKDAGLA</sequence>
<accession>O88563</accession>
<accession>O88270</accession>
<dbReference type="EC" id="7.6.2.-" evidence="7"/>
<dbReference type="EC" id="7.6.2.2" evidence="3"/>
<dbReference type="EC" id="7.6.2.3" evidence="3"/>
<dbReference type="EMBL" id="AF072816">
    <property type="protein sequence ID" value="AAC25416.1"/>
    <property type="molecule type" value="mRNA"/>
</dbReference>
<dbReference type="EMBL" id="AB010467">
    <property type="protein sequence ID" value="BAA28955.1"/>
    <property type="status" value="ALT_FRAME"/>
    <property type="molecule type" value="mRNA"/>
</dbReference>
<dbReference type="RefSeq" id="NP_542148.1">
    <property type="nucleotide sequence ID" value="NM_080581.1"/>
</dbReference>
<dbReference type="SMR" id="O88563"/>
<dbReference type="BioGRID" id="250828">
    <property type="interactions" value="1"/>
</dbReference>
<dbReference type="FunCoup" id="O88563">
    <property type="interactions" value="888"/>
</dbReference>
<dbReference type="STRING" id="10116.ENSRNOP00000003977"/>
<dbReference type="BindingDB" id="O88563"/>
<dbReference type="ChEMBL" id="CHEMBL2073682"/>
<dbReference type="GlyCosmos" id="O88563">
    <property type="glycosylation" value="3 sites, No reported glycans"/>
</dbReference>
<dbReference type="GlyGen" id="O88563">
    <property type="glycosylation" value="3 sites"/>
</dbReference>
<dbReference type="iPTMnet" id="O88563"/>
<dbReference type="PhosphoSitePlus" id="O88563"/>
<dbReference type="PaxDb" id="10116-ENSRNOP00000003977"/>
<dbReference type="GeneID" id="140668"/>
<dbReference type="KEGG" id="rno:140668"/>
<dbReference type="AGR" id="RGD:71101"/>
<dbReference type="CTD" id="8714"/>
<dbReference type="RGD" id="71101">
    <property type="gene designation" value="Abcc3"/>
</dbReference>
<dbReference type="eggNOG" id="KOG0054">
    <property type="taxonomic scope" value="Eukaryota"/>
</dbReference>
<dbReference type="InParanoid" id="O88563"/>
<dbReference type="PhylomeDB" id="O88563"/>
<dbReference type="Reactome" id="R-RNO-159418">
    <property type="pathway name" value="Recycling of bile acids and salts"/>
</dbReference>
<dbReference type="Reactome" id="R-RNO-382556">
    <property type="pathway name" value="ABC-family proteins mediated transport"/>
</dbReference>
<dbReference type="Reactome" id="R-RNO-9749641">
    <property type="pathway name" value="Aspirin ADME"/>
</dbReference>
<dbReference type="Reactome" id="R-RNO-9753281">
    <property type="pathway name" value="Paracetamol ADME"/>
</dbReference>
<dbReference type="PRO" id="PR:O88563"/>
<dbReference type="Proteomes" id="UP000002494">
    <property type="component" value="Unplaced"/>
</dbReference>
<dbReference type="GO" id="GO:0009925">
    <property type="term" value="C:basal plasma membrane"/>
    <property type="evidence" value="ECO:0000266"/>
    <property type="project" value="RGD"/>
</dbReference>
<dbReference type="GO" id="GO:0016323">
    <property type="term" value="C:basolateral plasma membrane"/>
    <property type="evidence" value="ECO:0000314"/>
    <property type="project" value="UniProtKB"/>
</dbReference>
<dbReference type="GO" id="GO:0016020">
    <property type="term" value="C:membrane"/>
    <property type="evidence" value="ECO:0000318"/>
    <property type="project" value="GO_Central"/>
</dbReference>
<dbReference type="GO" id="GO:0005886">
    <property type="term" value="C:plasma membrane"/>
    <property type="evidence" value="ECO:0000314"/>
    <property type="project" value="ARUK-UCL"/>
</dbReference>
<dbReference type="GO" id="GO:0015432">
    <property type="term" value="F:ABC-type bile acid transporter activity"/>
    <property type="evidence" value="ECO:0000314"/>
    <property type="project" value="UniProtKB"/>
</dbReference>
<dbReference type="GO" id="GO:0015431">
    <property type="term" value="F:ABC-type glutathione S-conjugate transporter activity"/>
    <property type="evidence" value="ECO:0000250"/>
    <property type="project" value="UniProtKB"/>
</dbReference>
<dbReference type="GO" id="GO:0008559">
    <property type="term" value="F:ABC-type xenobiotic transporter activity"/>
    <property type="evidence" value="ECO:0000266"/>
    <property type="project" value="RGD"/>
</dbReference>
<dbReference type="GO" id="GO:0005524">
    <property type="term" value="F:ATP binding"/>
    <property type="evidence" value="ECO:0007669"/>
    <property type="project" value="UniProtKB-KW"/>
</dbReference>
<dbReference type="GO" id="GO:0016887">
    <property type="term" value="F:ATP hydrolysis activity"/>
    <property type="evidence" value="ECO:0007669"/>
    <property type="project" value="InterPro"/>
</dbReference>
<dbReference type="GO" id="GO:0042626">
    <property type="term" value="F:ATPase-coupled transmembrane transporter activity"/>
    <property type="evidence" value="ECO:0000314"/>
    <property type="project" value="MGI"/>
</dbReference>
<dbReference type="GO" id="GO:0015164">
    <property type="term" value="F:glucuronoside transmembrane transporter activity"/>
    <property type="evidence" value="ECO:0000266"/>
    <property type="project" value="RGD"/>
</dbReference>
<dbReference type="GO" id="GO:0071714">
    <property type="term" value="F:icosanoid transmembrane transporter activity"/>
    <property type="evidence" value="ECO:0000266"/>
    <property type="project" value="RGD"/>
</dbReference>
<dbReference type="GO" id="GO:0042910">
    <property type="term" value="F:xenobiotic transmembrane transporter activity"/>
    <property type="evidence" value="ECO:0000266"/>
    <property type="project" value="RGD"/>
</dbReference>
<dbReference type="GO" id="GO:0015721">
    <property type="term" value="P:bile acid and bile salt transport"/>
    <property type="evidence" value="ECO:0000315"/>
    <property type="project" value="UniProtKB"/>
</dbReference>
<dbReference type="GO" id="GO:0015722">
    <property type="term" value="P:canalicular bile acid transport"/>
    <property type="evidence" value="ECO:0000314"/>
    <property type="project" value="MGI"/>
</dbReference>
<dbReference type="GO" id="GO:0071716">
    <property type="term" value="P:leukotriene transport"/>
    <property type="evidence" value="ECO:0000250"/>
    <property type="project" value="UniProtKB"/>
</dbReference>
<dbReference type="GO" id="GO:0098656">
    <property type="term" value="P:monoatomic anion transmembrane transport"/>
    <property type="evidence" value="ECO:0000314"/>
    <property type="project" value="RGD"/>
</dbReference>
<dbReference type="GO" id="GO:0032355">
    <property type="term" value="P:response to estradiol"/>
    <property type="evidence" value="ECO:0000270"/>
    <property type="project" value="RGD"/>
</dbReference>
<dbReference type="GO" id="GO:0032496">
    <property type="term" value="P:response to lipopolysaccharide"/>
    <property type="evidence" value="ECO:0000270"/>
    <property type="project" value="RGD"/>
</dbReference>
<dbReference type="GO" id="GO:1904772">
    <property type="term" value="P:response to tetrachloromethane"/>
    <property type="evidence" value="ECO:0000270"/>
    <property type="project" value="RGD"/>
</dbReference>
<dbReference type="GO" id="GO:0055085">
    <property type="term" value="P:transmembrane transport"/>
    <property type="evidence" value="ECO:0000315"/>
    <property type="project" value="RGD"/>
</dbReference>
<dbReference type="GO" id="GO:0006855">
    <property type="term" value="P:xenobiotic transmembrane transport"/>
    <property type="evidence" value="ECO:0000266"/>
    <property type="project" value="RGD"/>
</dbReference>
<dbReference type="GO" id="GO:0042908">
    <property type="term" value="P:xenobiotic transport"/>
    <property type="evidence" value="ECO:0000266"/>
    <property type="project" value="RGD"/>
</dbReference>
<dbReference type="CDD" id="cd18595">
    <property type="entry name" value="ABC_6TM_MRP1_2_3_6_D1_like"/>
    <property type="match status" value="1"/>
</dbReference>
<dbReference type="CDD" id="cd18603">
    <property type="entry name" value="ABC_6TM_MRP1_2_3_6_D2_like"/>
    <property type="match status" value="1"/>
</dbReference>
<dbReference type="CDD" id="cd03250">
    <property type="entry name" value="ABCC_MRP_domain1"/>
    <property type="match status" value="1"/>
</dbReference>
<dbReference type="CDD" id="cd03244">
    <property type="entry name" value="ABCC_MRP_domain2"/>
    <property type="match status" value="1"/>
</dbReference>
<dbReference type="FunFam" id="3.40.50.300:FF:000293">
    <property type="entry name" value="ATP binding cassette subfamily C member 1"/>
    <property type="match status" value="1"/>
</dbReference>
<dbReference type="FunFam" id="1.20.1560.10:FF:000001">
    <property type="entry name" value="ATP-binding cassette subfamily C member 1"/>
    <property type="match status" value="1"/>
</dbReference>
<dbReference type="FunFam" id="1.20.1560.10:FF:000007">
    <property type="entry name" value="ATP-binding cassette subfamily C member 1"/>
    <property type="match status" value="1"/>
</dbReference>
<dbReference type="FunFam" id="3.40.50.300:FF:000074">
    <property type="entry name" value="Multidrug resistance-associated protein 5 isoform 1"/>
    <property type="match status" value="1"/>
</dbReference>
<dbReference type="Gene3D" id="1.20.1560.10">
    <property type="entry name" value="ABC transporter type 1, transmembrane domain"/>
    <property type="match status" value="2"/>
</dbReference>
<dbReference type="Gene3D" id="3.40.50.300">
    <property type="entry name" value="P-loop containing nucleotide triphosphate hydrolases"/>
    <property type="match status" value="2"/>
</dbReference>
<dbReference type="InterPro" id="IPR003593">
    <property type="entry name" value="AAA+_ATPase"/>
</dbReference>
<dbReference type="InterPro" id="IPR011527">
    <property type="entry name" value="ABC1_TM_dom"/>
</dbReference>
<dbReference type="InterPro" id="IPR036640">
    <property type="entry name" value="ABC1_TM_sf"/>
</dbReference>
<dbReference type="InterPro" id="IPR003439">
    <property type="entry name" value="ABC_transporter-like_ATP-bd"/>
</dbReference>
<dbReference type="InterPro" id="IPR017871">
    <property type="entry name" value="ABC_transporter-like_CS"/>
</dbReference>
<dbReference type="InterPro" id="IPR050173">
    <property type="entry name" value="ABC_transporter_C-like"/>
</dbReference>
<dbReference type="InterPro" id="IPR005292">
    <property type="entry name" value="MRP"/>
</dbReference>
<dbReference type="InterPro" id="IPR027417">
    <property type="entry name" value="P-loop_NTPase"/>
</dbReference>
<dbReference type="InterPro" id="IPR056227">
    <property type="entry name" value="TMD0_ABC"/>
</dbReference>
<dbReference type="NCBIfam" id="TIGR00957">
    <property type="entry name" value="MRP_assoc_pro"/>
    <property type="match status" value="1"/>
</dbReference>
<dbReference type="PANTHER" id="PTHR24223">
    <property type="entry name" value="ATP-BINDING CASSETTE SUB-FAMILY C"/>
    <property type="match status" value="1"/>
</dbReference>
<dbReference type="PANTHER" id="PTHR24223:SF405">
    <property type="entry name" value="ATP-BINDING CASSETTE SUB-FAMILY C MEMBER 3"/>
    <property type="match status" value="1"/>
</dbReference>
<dbReference type="Pfam" id="PF00664">
    <property type="entry name" value="ABC_membrane"/>
    <property type="match status" value="2"/>
</dbReference>
<dbReference type="Pfam" id="PF00005">
    <property type="entry name" value="ABC_tran"/>
    <property type="match status" value="2"/>
</dbReference>
<dbReference type="Pfam" id="PF24357">
    <property type="entry name" value="TMD0_ABC"/>
    <property type="match status" value="1"/>
</dbReference>
<dbReference type="SMART" id="SM00382">
    <property type="entry name" value="AAA"/>
    <property type="match status" value="2"/>
</dbReference>
<dbReference type="SUPFAM" id="SSF90123">
    <property type="entry name" value="ABC transporter transmembrane region"/>
    <property type="match status" value="2"/>
</dbReference>
<dbReference type="SUPFAM" id="SSF52540">
    <property type="entry name" value="P-loop containing nucleoside triphosphate hydrolases"/>
    <property type="match status" value="2"/>
</dbReference>
<dbReference type="PROSITE" id="PS50929">
    <property type="entry name" value="ABC_TM1F"/>
    <property type="match status" value="2"/>
</dbReference>
<dbReference type="PROSITE" id="PS00211">
    <property type="entry name" value="ABC_TRANSPORTER_1"/>
    <property type="match status" value="2"/>
</dbReference>
<dbReference type="PROSITE" id="PS50893">
    <property type="entry name" value="ABC_TRANSPORTER_2"/>
    <property type="match status" value="2"/>
</dbReference>
<keyword id="KW-0067">ATP-binding</keyword>
<keyword id="KW-1003">Cell membrane</keyword>
<keyword id="KW-0325">Glycoprotein</keyword>
<keyword id="KW-0445">Lipid transport</keyword>
<keyword id="KW-0472">Membrane</keyword>
<keyword id="KW-0547">Nucleotide-binding</keyword>
<keyword id="KW-0597">Phosphoprotein</keyword>
<keyword id="KW-1185">Reference proteome</keyword>
<keyword id="KW-0677">Repeat</keyword>
<keyword id="KW-1278">Translocase</keyword>
<keyword id="KW-0812">Transmembrane</keyword>
<keyword id="KW-1133">Transmembrane helix</keyword>
<keyword id="KW-0813">Transport</keyword>
<feature type="chain" id="PRO_0000093361" description="ATP-binding cassette sub-family C member 3">
    <location>
        <begin position="1"/>
        <end position="1522"/>
    </location>
</feature>
<feature type="topological domain" description="Extracellular" evidence="1">
    <location>
        <begin position="1"/>
        <end position="32"/>
    </location>
</feature>
<feature type="transmembrane region" description="Helical; Name=1" evidence="6">
    <location>
        <begin position="33"/>
        <end position="53"/>
    </location>
</feature>
<feature type="topological domain" description="Cytoplasmic" evidence="1">
    <location>
        <begin position="54"/>
        <end position="73"/>
    </location>
</feature>
<feature type="transmembrane region" description="Helical; Name=2" evidence="6">
    <location>
        <begin position="74"/>
        <end position="94"/>
    </location>
</feature>
<feature type="topological domain" description="Extracellular" evidence="1">
    <location>
        <begin position="95"/>
        <end position="99"/>
    </location>
</feature>
<feature type="transmembrane region" description="Helical; Name=3" evidence="6">
    <location>
        <begin position="100"/>
        <end position="120"/>
    </location>
</feature>
<feature type="topological domain" description="Cytoplasmic" evidence="1">
    <location>
        <begin position="121"/>
        <end position="132"/>
    </location>
</feature>
<feature type="transmembrane region" description="Helical; Name=4" evidence="6">
    <location>
        <begin position="133"/>
        <end position="153"/>
    </location>
</feature>
<feature type="topological domain" description="Extracellular" evidence="1">
    <location>
        <begin position="154"/>
        <end position="171"/>
    </location>
</feature>
<feature type="transmembrane region" description="Helical; Name=5" evidence="6">
    <location>
        <begin position="172"/>
        <end position="192"/>
    </location>
</feature>
<feature type="topological domain" description="Cytoplasmic" evidence="1">
    <location>
        <begin position="193"/>
        <end position="301"/>
    </location>
</feature>
<feature type="transmembrane region" description="Helical; Name=6" evidence="6">
    <location>
        <begin position="302"/>
        <end position="322"/>
    </location>
</feature>
<feature type="topological domain" description="Extracellular" evidence="1">
    <location>
        <begin position="323"/>
        <end position="347"/>
    </location>
</feature>
<feature type="transmembrane region" description="Helical; Name=7" evidence="6">
    <location>
        <begin position="348"/>
        <end position="368"/>
    </location>
</feature>
<feature type="topological domain" description="Cytoplasmic" evidence="1">
    <location>
        <begin position="369"/>
        <end position="424"/>
    </location>
</feature>
<feature type="transmembrane region" description="Helical; Name=8" evidence="6">
    <location>
        <begin position="425"/>
        <end position="445"/>
    </location>
</feature>
<feature type="topological domain" description="Extracellular" evidence="1">
    <location>
        <begin position="446"/>
        <end position="448"/>
    </location>
</feature>
<feature type="transmembrane region" description="Helical; Name=9" evidence="6">
    <location>
        <begin position="449"/>
        <end position="469"/>
    </location>
</feature>
<feature type="topological domain" description="Cytoplasmic" evidence="1">
    <location>
        <begin position="470"/>
        <end position="531"/>
    </location>
</feature>
<feature type="transmembrane region" description="Helical; Name=10" evidence="6">
    <location>
        <begin position="532"/>
        <end position="552"/>
    </location>
</feature>
<feature type="topological domain" description="Extracellular" evidence="1">
    <location>
        <begin position="553"/>
        <end position="574"/>
    </location>
</feature>
<feature type="transmembrane region" description="Helical; Name=11" evidence="6">
    <location>
        <begin position="575"/>
        <end position="595"/>
    </location>
</feature>
<feature type="topological domain" description="Cytoplasmic" evidence="1">
    <location>
        <begin position="596"/>
        <end position="958"/>
    </location>
</feature>
<feature type="transmembrane region" description="Helical; Name=12" evidence="6">
    <location>
        <begin position="959"/>
        <end position="979"/>
    </location>
</feature>
<feature type="topological domain" description="Extracellular" evidence="1">
    <location>
        <begin position="980"/>
        <end position="1016"/>
    </location>
</feature>
<feature type="transmembrane region" description="Helical; Name=13" evidence="6">
    <location>
        <begin position="1017"/>
        <end position="1037"/>
    </location>
</feature>
<feature type="topological domain" description="Cytoplasmic" evidence="1">
    <location>
        <begin position="1038"/>
        <end position="1080"/>
    </location>
</feature>
<feature type="transmembrane region" description="Helical; Name=14" evidence="6">
    <location>
        <begin position="1081"/>
        <end position="1101"/>
    </location>
</feature>
<feature type="topological domain" description="Extracellular" evidence="1">
    <location>
        <position position="1102"/>
    </location>
</feature>
<feature type="transmembrane region" description="Helical; Name=15" evidence="6">
    <location>
        <begin position="1103"/>
        <end position="1123"/>
    </location>
</feature>
<feature type="topological domain" description="Cytoplasmic" evidence="1">
    <location>
        <begin position="1124"/>
        <end position="1194"/>
    </location>
</feature>
<feature type="transmembrane region" description="Helical; Name=16" evidence="6">
    <location>
        <begin position="1195"/>
        <end position="1215"/>
    </location>
</feature>
<feature type="topological domain" description="Extracellular" evidence="1">
    <location>
        <begin position="1216"/>
        <end position="1217"/>
    </location>
</feature>
<feature type="transmembrane region" description="Helical; Name=17" evidence="6">
    <location>
        <begin position="1218"/>
        <end position="1238"/>
    </location>
</feature>
<feature type="topological domain" description="Cytoplasmic" evidence="1">
    <location>
        <begin position="1239"/>
        <end position="1522"/>
    </location>
</feature>
<feature type="domain" description="ABC transmembrane type-1 1" evidence="6">
    <location>
        <begin position="310"/>
        <end position="592"/>
    </location>
</feature>
<feature type="domain" description="ABC transporter 1" evidence="5">
    <location>
        <begin position="625"/>
        <end position="849"/>
    </location>
</feature>
<feature type="domain" description="ABC transmembrane type-1 2" evidence="6">
    <location>
        <begin position="966"/>
        <end position="1247"/>
    </location>
</feature>
<feature type="domain" description="ABC transporter 2" evidence="5">
    <location>
        <begin position="1286"/>
        <end position="1518"/>
    </location>
</feature>
<feature type="binding site" evidence="5">
    <location>
        <begin position="659"/>
        <end position="666"/>
    </location>
    <ligand>
        <name>ATP</name>
        <dbReference type="ChEBI" id="CHEBI:30616"/>
        <label>1</label>
    </ligand>
</feature>
<feature type="binding site" evidence="5">
    <location>
        <begin position="1318"/>
        <end position="1325"/>
    </location>
    <ligand>
        <name>ATP</name>
        <dbReference type="ChEBI" id="CHEBI:30616"/>
        <label>2</label>
    </ligand>
</feature>
<feature type="modified residue" description="Phosphoserine" evidence="13">
    <location>
        <position position="902"/>
    </location>
</feature>
<feature type="modified residue" description="Phosphoserine" evidence="13">
    <location>
        <position position="905"/>
    </location>
</feature>
<feature type="glycosylation site" description="N-linked (GlcNAc...) asparagine" evidence="4">
    <location>
        <position position="18"/>
    </location>
</feature>
<feature type="glycosylation site" description="N-linked (GlcNAc...) asparagine" evidence="4">
    <location>
        <position position="1001"/>
    </location>
</feature>
<feature type="glycosylation site" description="N-linked (GlcNAc...) asparagine" evidence="4">
    <location>
        <position position="1002"/>
    </location>
</feature>
<feature type="sequence conflict" description="In Ref. 1; BAA28955." evidence="11" ref="1">
    <original>I</original>
    <variation>L</variation>
    <location>
        <position position="645"/>
    </location>
</feature>
<feature type="sequence conflict" description="In Ref. 1; BAA28955." evidence="11" ref="1">
    <original>H</original>
    <variation>D</variation>
    <location>
        <position position="1075"/>
    </location>
</feature>
<reference key="1">
    <citation type="journal article" date="1998" name="Mol. Pharmacol.">
        <title>Hepatic expression of multidrug resistance-associated protein-like proteins maintained in eisai hyperbilirubinemic rats.</title>
        <authorList>
            <person name="Hirohashi T."/>
            <person name="Suzuki H."/>
            <person name="Ito K."/>
            <person name="Ogawa K."/>
            <person name="Kume K."/>
            <person name="Shimizu T."/>
            <person name="Sugiyama Y."/>
        </authorList>
    </citation>
    <scope>NUCLEOTIDE SEQUENCE [MRNA]</scope>
    <scope>TISSUE SPECIFICITY</scope>
    <scope>INDUCTION</scope>
    <source>
        <strain>Sprague-Dawley</strain>
        <tissue>Colon</tissue>
    </source>
</reference>
<reference key="2">
    <citation type="journal article" date="1999" name="Am. J. Physiol.">
        <title>MRP3, a new ATP-binding cassette protein localized to the canalicular domain of the hepatocyte.</title>
        <authorList>
            <person name="Ortiz D.F."/>
            <person name="Li S."/>
            <person name="Iyer R."/>
            <person name="Zhang X."/>
            <person name="Novikoff P."/>
            <person name="Arias I.M."/>
        </authorList>
    </citation>
    <scope>NUCLEOTIDE SEQUENCE [MRNA]</scope>
    <source>
        <tissue>Liver</tissue>
    </source>
</reference>
<reference key="3">
    <citation type="journal article" date="2000" name="J. Biol. Chem.">
        <title>ATP-dependent transport of bile salts by rat multidrug resistance-associated protein 3 (Mrp3).</title>
        <authorList>
            <person name="Hirohashi T."/>
            <person name="Suzuki H."/>
            <person name="Takikawa H."/>
            <person name="Sugiyama Y."/>
        </authorList>
    </citation>
    <scope>FUNCTION</scope>
    <scope>CATALYTIC ACTIVITY</scope>
    <scope>BIOPHYSICOCHEMICAL PROPERTIES</scope>
</reference>
<reference key="4">
    <citation type="journal article" date="2002" name="Am. J. Physiol.">
        <title>Expression and localization of the multidrug resistance-associated protein 3 in rat small and large intestine.</title>
        <authorList>
            <person name="Rost D."/>
            <person name="Mahner S."/>
            <person name="Sugiyama Y."/>
            <person name="Stremmel W."/>
        </authorList>
    </citation>
    <scope>TISSUE SPECIFICITY</scope>
    <scope>SUBCELLULAR LOCATION</scope>
</reference>
<reference key="5">
    <citation type="journal article" date="2012" name="Nat. Commun.">
        <title>Quantitative maps of protein phosphorylation sites across 14 different rat organs and tissues.</title>
        <authorList>
            <person name="Lundby A."/>
            <person name="Secher A."/>
            <person name="Lage K."/>
            <person name="Nordsborg N.B."/>
            <person name="Dmytriyev A."/>
            <person name="Lundby C."/>
            <person name="Olsen J.V."/>
        </authorList>
    </citation>
    <scope>PHOSPHORYLATION [LARGE SCALE ANALYSIS] AT SER-902 AND SER-905</scope>
    <scope>IDENTIFICATION BY MASS SPECTROMETRY [LARGE SCALE ANALYSIS]</scope>
</reference>
<name>MRP3_RAT</name>
<organism>
    <name type="scientific">Rattus norvegicus</name>
    <name type="common">Rat</name>
    <dbReference type="NCBI Taxonomy" id="10116"/>
    <lineage>
        <taxon>Eukaryota</taxon>
        <taxon>Metazoa</taxon>
        <taxon>Chordata</taxon>
        <taxon>Craniata</taxon>
        <taxon>Vertebrata</taxon>
        <taxon>Euteleostomi</taxon>
        <taxon>Mammalia</taxon>
        <taxon>Eutheria</taxon>
        <taxon>Euarchontoglires</taxon>
        <taxon>Glires</taxon>
        <taxon>Rodentia</taxon>
        <taxon>Myomorpha</taxon>
        <taxon>Muroidea</taxon>
        <taxon>Muridae</taxon>
        <taxon>Murinae</taxon>
        <taxon>Rattus</taxon>
    </lineage>
</organism>
<gene>
    <name type="primary">Abcc3</name>
    <name type="synonym">Cmoat2</name>
    <name type="synonym">Mlp2</name>
    <name type="synonym">Mrp3</name>
</gene>